<protein>
    <recommendedName>
        <fullName evidence="1">Pyrimidine monooxygenase RutA</fullName>
        <ecNumber evidence="1">1.14.99.46</ecNumber>
    </recommendedName>
</protein>
<sequence>MDVGVFIPIGNNGWLISENAPQYMPTFELNKAIVQKAEGYGFDFALSMIKLRGFGGKTEFWEHNLESFTLMAGLAAVTSKIQLFATAATLTLPPAIVARMASTIDSISGGRFGVNLVTGWQKPEYSQMGLWPGDEFFGTRYQYLGEYAQVLRDLWATGRSDFKGEHFQMEDCRVSPKPQADMKIICAGSSDAGMAFSAQYADYNFCFGKGVNTPTAFAPAAERLQAACAKTGRHVTSCVLFMVIADETDEAARAKWEHYKAGADEEAIAWLGEQGAADKGADSNIRQMADPTSAVNINMGTLVGSYANVARMLDEIATVPGMQGVMLTFDDFLEGVEAFGQKIQPLMQSRRHVTALKESA</sequence>
<reference key="1">
    <citation type="journal article" date="2008" name="Proc. Natl. Acad. Sci. U.S.A.">
        <title>Nitrogen fixation island and rhizosphere competence traits in the genome of root-associated Pseudomonas stutzeri A1501.</title>
        <authorList>
            <person name="Yan Y."/>
            <person name="Yang J."/>
            <person name="Dou Y."/>
            <person name="Chen M."/>
            <person name="Ping S."/>
            <person name="Peng J."/>
            <person name="Lu W."/>
            <person name="Zhang W."/>
            <person name="Yao Z."/>
            <person name="Li H."/>
            <person name="Liu W."/>
            <person name="He S."/>
            <person name="Geng L."/>
            <person name="Zhang X."/>
            <person name="Yang F."/>
            <person name="Yu H."/>
            <person name="Zhan Y."/>
            <person name="Li D."/>
            <person name="Lin Z."/>
            <person name="Wang Y."/>
            <person name="Elmerich C."/>
            <person name="Lin M."/>
            <person name="Jin Q."/>
        </authorList>
    </citation>
    <scope>NUCLEOTIDE SEQUENCE [LARGE SCALE GENOMIC DNA]</scope>
    <source>
        <strain>A1501</strain>
    </source>
</reference>
<accession>A4VQH4</accession>
<gene>
    <name evidence="1" type="primary">rutA</name>
    <name type="ordered locus">PST_3597</name>
</gene>
<organism>
    <name type="scientific">Stutzerimonas stutzeri (strain A1501)</name>
    <name type="common">Pseudomonas stutzeri</name>
    <dbReference type="NCBI Taxonomy" id="379731"/>
    <lineage>
        <taxon>Bacteria</taxon>
        <taxon>Pseudomonadati</taxon>
        <taxon>Pseudomonadota</taxon>
        <taxon>Gammaproteobacteria</taxon>
        <taxon>Pseudomonadales</taxon>
        <taxon>Pseudomonadaceae</taxon>
        <taxon>Stutzerimonas</taxon>
    </lineage>
</organism>
<name>RUTA_STUS1</name>
<feature type="chain" id="PRO_0000402635" description="Pyrimidine monooxygenase RutA">
    <location>
        <begin position="1"/>
        <end position="360"/>
    </location>
</feature>
<feature type="binding site" evidence="1">
    <location>
        <begin position="49"/>
        <end position="50"/>
    </location>
    <ligand>
        <name>FMN</name>
        <dbReference type="ChEBI" id="CHEBI:58210"/>
    </ligand>
</feature>
<feature type="binding site" evidence="1">
    <location>
        <position position="115"/>
    </location>
    <ligand>
        <name>FMN</name>
        <dbReference type="ChEBI" id="CHEBI:58210"/>
    </ligand>
</feature>
<feature type="binding site" evidence="1">
    <location>
        <position position="124"/>
    </location>
    <ligand>
        <name>FMN</name>
        <dbReference type="ChEBI" id="CHEBI:58210"/>
    </ligand>
</feature>
<feature type="binding site" evidence="1">
    <location>
        <begin position="140"/>
        <end position="141"/>
    </location>
    <ligand>
        <name>FMN</name>
        <dbReference type="ChEBI" id="CHEBI:58210"/>
    </ligand>
</feature>
<feature type="binding site" evidence="1">
    <location>
        <position position="190"/>
    </location>
    <ligand>
        <name>FMN</name>
        <dbReference type="ChEBI" id="CHEBI:58210"/>
    </ligand>
</feature>
<proteinExistence type="inferred from homology"/>
<evidence type="ECO:0000255" key="1">
    <source>
        <dbReference type="HAMAP-Rule" id="MF_01699"/>
    </source>
</evidence>
<comment type="function">
    <text evidence="1">Catalyzes the pyrimidine ring opening between N-3 and C-4 by an unusual flavin hydroperoxide-catalyzed mechanism, adding oxygen atoms in the process to yield ureidoacrylate peracid, that immediately reacts with FMN forming ureidoacrylate and FMN-N(5)-oxide. The FMN-N(5)-oxide reacts spontaneously with NADH to produce FMN. Requires the flavin reductase RutF to regenerate FMN in vivo.</text>
</comment>
<comment type="catalytic activity">
    <reaction evidence="1">
        <text>uracil + FMNH2 + NADH + O2 = (Z)-3-ureidoacrylate + FMN + NAD(+) + H2O + H(+)</text>
        <dbReference type="Rhea" id="RHEA:31587"/>
        <dbReference type="ChEBI" id="CHEBI:15377"/>
        <dbReference type="ChEBI" id="CHEBI:15378"/>
        <dbReference type="ChEBI" id="CHEBI:15379"/>
        <dbReference type="ChEBI" id="CHEBI:17568"/>
        <dbReference type="ChEBI" id="CHEBI:57540"/>
        <dbReference type="ChEBI" id="CHEBI:57618"/>
        <dbReference type="ChEBI" id="CHEBI:57945"/>
        <dbReference type="ChEBI" id="CHEBI:58210"/>
        <dbReference type="ChEBI" id="CHEBI:59891"/>
        <dbReference type="EC" id="1.14.99.46"/>
    </reaction>
</comment>
<comment type="catalytic activity">
    <reaction evidence="1">
        <text>thymine + FMNH2 + NADH + O2 = (Z)-2-methylureidoacrylate + FMN + NAD(+) + H2O + H(+)</text>
        <dbReference type="Rhea" id="RHEA:31599"/>
        <dbReference type="ChEBI" id="CHEBI:15377"/>
        <dbReference type="ChEBI" id="CHEBI:15378"/>
        <dbReference type="ChEBI" id="CHEBI:15379"/>
        <dbReference type="ChEBI" id="CHEBI:17821"/>
        <dbReference type="ChEBI" id="CHEBI:57540"/>
        <dbReference type="ChEBI" id="CHEBI:57618"/>
        <dbReference type="ChEBI" id="CHEBI:57945"/>
        <dbReference type="ChEBI" id="CHEBI:58210"/>
        <dbReference type="ChEBI" id="CHEBI:143783"/>
        <dbReference type="EC" id="1.14.99.46"/>
    </reaction>
</comment>
<comment type="similarity">
    <text evidence="1">Belongs to the NtaA/SnaA/DszA monooxygenase family. RutA subfamily.</text>
</comment>
<dbReference type="EC" id="1.14.99.46" evidence="1"/>
<dbReference type="EMBL" id="CP000304">
    <property type="protein sequence ID" value="ABP81225.1"/>
    <property type="molecule type" value="Genomic_DNA"/>
</dbReference>
<dbReference type="RefSeq" id="WP_011914619.1">
    <property type="nucleotide sequence ID" value="NC_009434.1"/>
</dbReference>
<dbReference type="SMR" id="A4VQH4"/>
<dbReference type="KEGG" id="psa:PST_3597"/>
<dbReference type="eggNOG" id="COG2141">
    <property type="taxonomic scope" value="Bacteria"/>
</dbReference>
<dbReference type="HOGENOM" id="CLU_027853_1_1_6"/>
<dbReference type="Proteomes" id="UP000000233">
    <property type="component" value="Chromosome"/>
</dbReference>
<dbReference type="GO" id="GO:0008726">
    <property type="term" value="F:alkanesulfonate monooxygenase activity"/>
    <property type="evidence" value="ECO:0007669"/>
    <property type="project" value="TreeGrafter"/>
</dbReference>
<dbReference type="GO" id="GO:0052614">
    <property type="term" value="F:uracil oxygenase activity"/>
    <property type="evidence" value="ECO:0007669"/>
    <property type="project" value="UniProtKB-EC"/>
</dbReference>
<dbReference type="GO" id="GO:0046306">
    <property type="term" value="P:alkanesulfonate catabolic process"/>
    <property type="evidence" value="ECO:0007669"/>
    <property type="project" value="TreeGrafter"/>
</dbReference>
<dbReference type="GO" id="GO:0019740">
    <property type="term" value="P:nitrogen utilization"/>
    <property type="evidence" value="ECO:0007669"/>
    <property type="project" value="UniProtKB-UniRule"/>
</dbReference>
<dbReference type="GO" id="GO:0006212">
    <property type="term" value="P:uracil catabolic process"/>
    <property type="evidence" value="ECO:0007669"/>
    <property type="project" value="UniProtKB-UniRule"/>
</dbReference>
<dbReference type="CDD" id="cd01094">
    <property type="entry name" value="Alkanesulfonate_monoxygenase"/>
    <property type="match status" value="1"/>
</dbReference>
<dbReference type="FunFam" id="3.20.20.30:FF:000003">
    <property type="entry name" value="Pyrimidine monooxygenase RutA"/>
    <property type="match status" value="1"/>
</dbReference>
<dbReference type="Gene3D" id="3.20.20.30">
    <property type="entry name" value="Luciferase-like domain"/>
    <property type="match status" value="1"/>
</dbReference>
<dbReference type="HAMAP" id="MF_01699">
    <property type="entry name" value="RutA"/>
    <property type="match status" value="1"/>
</dbReference>
<dbReference type="InterPro" id="IPR011251">
    <property type="entry name" value="Luciferase-like_dom"/>
</dbReference>
<dbReference type="InterPro" id="IPR036661">
    <property type="entry name" value="Luciferase-like_sf"/>
</dbReference>
<dbReference type="InterPro" id="IPR019914">
    <property type="entry name" value="Pyrimidine_monooxygenase_RutA"/>
</dbReference>
<dbReference type="InterPro" id="IPR050172">
    <property type="entry name" value="SsuD_RutA_monooxygenase"/>
</dbReference>
<dbReference type="NCBIfam" id="TIGR03612">
    <property type="entry name" value="RutA"/>
    <property type="match status" value="1"/>
</dbReference>
<dbReference type="PANTHER" id="PTHR42847">
    <property type="entry name" value="ALKANESULFONATE MONOOXYGENASE"/>
    <property type="match status" value="1"/>
</dbReference>
<dbReference type="PANTHER" id="PTHR42847:SF4">
    <property type="entry name" value="ALKANESULFONATE MONOOXYGENASE-RELATED"/>
    <property type="match status" value="1"/>
</dbReference>
<dbReference type="Pfam" id="PF00296">
    <property type="entry name" value="Bac_luciferase"/>
    <property type="match status" value="1"/>
</dbReference>
<dbReference type="SUPFAM" id="SSF51679">
    <property type="entry name" value="Bacterial luciferase-like"/>
    <property type="match status" value="1"/>
</dbReference>
<keyword id="KW-0285">Flavoprotein</keyword>
<keyword id="KW-0288">FMN</keyword>
<keyword id="KW-0503">Monooxygenase</keyword>
<keyword id="KW-0521">NADP</keyword>
<keyword id="KW-0560">Oxidoreductase</keyword>
<keyword id="KW-1185">Reference proteome</keyword>